<evidence type="ECO:0000255" key="1">
    <source>
        <dbReference type="HAMAP-Rule" id="MF_02071"/>
    </source>
</evidence>
<sequence length="263" mass="29290">MNRIYLYLLIVLILAGCSSPGGRYDMSDDQAPDTPLSVEHIEDAHPQYEPYSFGGNKDYNLRGKSYRIIKNPKGFTESGKASWYGKKFHGHLTSNGEIYDMYSMTAAHKTLPIPSYVKVTNTDNGKSTVVRVNDRGPFHDGRIIDLSYAAAYKIGVVQAGTANVRIEVITVDKPTKPRPKSKNNALEYVIQVVSSQHIERVRTLAQNLGQNLSAPSFVESTNNTHRLFLGPFTDDDLTQTLLEQVKSAGYDSAFIKTINKRAK</sequence>
<proteinExistence type="inferred from homology"/>
<feature type="signal peptide" evidence="1">
    <location>
        <begin position="1"/>
        <end position="16"/>
    </location>
</feature>
<feature type="chain" id="PRO_0000030811" description="Endolytic peptidoglycan transglycosylase RlpA" evidence="1">
    <location>
        <begin position="17"/>
        <end position="263"/>
    </location>
</feature>
<feature type="domain" description="SPOR" evidence="1">
    <location>
        <begin position="182"/>
        <end position="257"/>
    </location>
</feature>
<feature type="lipid moiety-binding region" description="N-palmitoyl cysteine" evidence="1">
    <location>
        <position position="17"/>
    </location>
</feature>
<feature type="lipid moiety-binding region" description="S-diacylglycerol cysteine" evidence="1">
    <location>
        <position position="17"/>
    </location>
</feature>
<organism>
    <name type="scientific">Vibrio cholerae serotype O1 (strain ATCC 39315 / El Tor Inaba N16961)</name>
    <dbReference type="NCBI Taxonomy" id="243277"/>
    <lineage>
        <taxon>Bacteria</taxon>
        <taxon>Pseudomonadati</taxon>
        <taxon>Pseudomonadota</taxon>
        <taxon>Gammaproteobacteria</taxon>
        <taxon>Vibrionales</taxon>
        <taxon>Vibrionaceae</taxon>
        <taxon>Vibrio</taxon>
    </lineage>
</organism>
<gene>
    <name evidence="1" type="primary">rlpA</name>
    <name type="ordered locus">VC_0948</name>
</gene>
<keyword id="KW-1003">Cell membrane</keyword>
<keyword id="KW-0961">Cell wall biogenesis/degradation</keyword>
<keyword id="KW-0449">Lipoprotein</keyword>
<keyword id="KW-0456">Lyase</keyword>
<keyword id="KW-0472">Membrane</keyword>
<keyword id="KW-0564">Palmitate</keyword>
<keyword id="KW-1185">Reference proteome</keyword>
<keyword id="KW-0732">Signal</keyword>
<accession>Q9KTF4</accession>
<reference key="1">
    <citation type="journal article" date="2000" name="Nature">
        <title>DNA sequence of both chromosomes of the cholera pathogen Vibrio cholerae.</title>
        <authorList>
            <person name="Heidelberg J.F."/>
            <person name="Eisen J.A."/>
            <person name="Nelson W.C."/>
            <person name="Clayton R.A."/>
            <person name="Gwinn M.L."/>
            <person name="Dodson R.J."/>
            <person name="Haft D.H."/>
            <person name="Hickey E.K."/>
            <person name="Peterson J.D."/>
            <person name="Umayam L.A."/>
            <person name="Gill S.R."/>
            <person name="Nelson K.E."/>
            <person name="Read T.D."/>
            <person name="Tettelin H."/>
            <person name="Richardson D.L."/>
            <person name="Ermolaeva M.D."/>
            <person name="Vamathevan J.J."/>
            <person name="Bass S."/>
            <person name="Qin H."/>
            <person name="Dragoi I."/>
            <person name="Sellers P."/>
            <person name="McDonald L.A."/>
            <person name="Utterback T.R."/>
            <person name="Fleischmann R.D."/>
            <person name="Nierman W.C."/>
            <person name="White O."/>
            <person name="Salzberg S.L."/>
            <person name="Smith H.O."/>
            <person name="Colwell R.R."/>
            <person name="Mekalanos J.J."/>
            <person name="Venter J.C."/>
            <person name="Fraser C.M."/>
        </authorList>
    </citation>
    <scope>NUCLEOTIDE SEQUENCE [LARGE SCALE GENOMIC DNA]</scope>
    <source>
        <strain>ATCC 39315 / El Tor Inaba N16961</strain>
    </source>
</reference>
<protein>
    <recommendedName>
        <fullName evidence="1">Endolytic peptidoglycan transglycosylase RlpA</fullName>
        <ecNumber evidence="1">4.2.2.-</ecNumber>
    </recommendedName>
</protein>
<dbReference type="EC" id="4.2.2.-" evidence="1"/>
<dbReference type="EMBL" id="AE003852">
    <property type="protein sequence ID" value="AAF94110.1"/>
    <property type="molecule type" value="Genomic_DNA"/>
</dbReference>
<dbReference type="PIR" id="G82259">
    <property type="entry name" value="G82259"/>
</dbReference>
<dbReference type="RefSeq" id="NP_230595.1">
    <property type="nucleotide sequence ID" value="NC_002505.1"/>
</dbReference>
<dbReference type="RefSeq" id="WP_001080119.1">
    <property type="nucleotide sequence ID" value="NZ_LT906614.1"/>
</dbReference>
<dbReference type="SMR" id="Q9KTF4"/>
<dbReference type="STRING" id="243277.VC_0948"/>
<dbReference type="DNASU" id="2614168"/>
<dbReference type="EnsemblBacteria" id="AAF94110">
    <property type="protein sequence ID" value="AAF94110"/>
    <property type="gene ID" value="VC_0948"/>
</dbReference>
<dbReference type="KEGG" id="vch:VC_0948"/>
<dbReference type="PATRIC" id="fig|243277.26.peg.903"/>
<dbReference type="eggNOG" id="COG0797">
    <property type="taxonomic scope" value="Bacteria"/>
</dbReference>
<dbReference type="HOGENOM" id="CLU_042923_3_4_6"/>
<dbReference type="Proteomes" id="UP000000584">
    <property type="component" value="Chromosome 1"/>
</dbReference>
<dbReference type="GO" id="GO:0009279">
    <property type="term" value="C:cell outer membrane"/>
    <property type="evidence" value="ECO:0000318"/>
    <property type="project" value="GO_Central"/>
</dbReference>
<dbReference type="GO" id="GO:0005886">
    <property type="term" value="C:plasma membrane"/>
    <property type="evidence" value="ECO:0007669"/>
    <property type="project" value="UniProtKB-SubCell"/>
</dbReference>
<dbReference type="GO" id="GO:0008932">
    <property type="term" value="F:lytic endotransglycosylase activity"/>
    <property type="evidence" value="ECO:0007669"/>
    <property type="project" value="UniProtKB-UniRule"/>
</dbReference>
<dbReference type="GO" id="GO:0042834">
    <property type="term" value="F:peptidoglycan binding"/>
    <property type="evidence" value="ECO:0007669"/>
    <property type="project" value="InterPro"/>
</dbReference>
<dbReference type="GO" id="GO:0071555">
    <property type="term" value="P:cell wall organization"/>
    <property type="evidence" value="ECO:0007669"/>
    <property type="project" value="UniProtKB-KW"/>
</dbReference>
<dbReference type="GO" id="GO:0000270">
    <property type="term" value="P:peptidoglycan metabolic process"/>
    <property type="evidence" value="ECO:0007669"/>
    <property type="project" value="UniProtKB-UniRule"/>
</dbReference>
<dbReference type="CDD" id="cd22268">
    <property type="entry name" value="DPBB_RlpA-like"/>
    <property type="match status" value="1"/>
</dbReference>
<dbReference type="FunFam" id="2.40.40.10:FF:000003">
    <property type="entry name" value="Endolytic peptidoglycan transglycosylase RlpA"/>
    <property type="match status" value="1"/>
</dbReference>
<dbReference type="Gene3D" id="2.40.40.10">
    <property type="entry name" value="RlpA-like domain"/>
    <property type="match status" value="1"/>
</dbReference>
<dbReference type="Gene3D" id="3.30.70.1070">
    <property type="entry name" value="Sporulation related repeat"/>
    <property type="match status" value="1"/>
</dbReference>
<dbReference type="HAMAP" id="MF_02071">
    <property type="entry name" value="RlpA"/>
    <property type="match status" value="1"/>
</dbReference>
<dbReference type="InterPro" id="IPR034718">
    <property type="entry name" value="RlpA"/>
</dbReference>
<dbReference type="InterPro" id="IPR009009">
    <property type="entry name" value="RlpA-like_DPBB"/>
</dbReference>
<dbReference type="InterPro" id="IPR036908">
    <property type="entry name" value="RlpA-like_sf"/>
</dbReference>
<dbReference type="InterPro" id="IPR012997">
    <property type="entry name" value="RplA"/>
</dbReference>
<dbReference type="InterPro" id="IPR007730">
    <property type="entry name" value="SPOR-like_dom"/>
</dbReference>
<dbReference type="InterPro" id="IPR036680">
    <property type="entry name" value="SPOR-like_sf"/>
</dbReference>
<dbReference type="NCBIfam" id="TIGR00413">
    <property type="entry name" value="rlpA"/>
    <property type="match status" value="1"/>
</dbReference>
<dbReference type="PANTHER" id="PTHR34183">
    <property type="entry name" value="ENDOLYTIC PEPTIDOGLYCAN TRANSGLYCOSYLASE RLPA"/>
    <property type="match status" value="1"/>
</dbReference>
<dbReference type="PANTHER" id="PTHR34183:SF1">
    <property type="entry name" value="ENDOLYTIC PEPTIDOGLYCAN TRANSGLYCOSYLASE RLPA"/>
    <property type="match status" value="1"/>
</dbReference>
<dbReference type="Pfam" id="PF03330">
    <property type="entry name" value="DPBB_1"/>
    <property type="match status" value="1"/>
</dbReference>
<dbReference type="Pfam" id="PF05036">
    <property type="entry name" value="SPOR"/>
    <property type="match status" value="1"/>
</dbReference>
<dbReference type="SUPFAM" id="SSF50685">
    <property type="entry name" value="Barwin-like endoglucanases"/>
    <property type="match status" value="1"/>
</dbReference>
<dbReference type="SUPFAM" id="SSF110997">
    <property type="entry name" value="Sporulation related repeat"/>
    <property type="match status" value="1"/>
</dbReference>
<dbReference type="PROSITE" id="PS51257">
    <property type="entry name" value="PROKAR_LIPOPROTEIN"/>
    <property type="match status" value="1"/>
</dbReference>
<dbReference type="PROSITE" id="PS51724">
    <property type="entry name" value="SPOR"/>
    <property type="match status" value="1"/>
</dbReference>
<comment type="function">
    <text evidence="1">Lytic transglycosylase with a strong preference for naked glycan strands that lack stem peptides.</text>
</comment>
<comment type="subcellular location">
    <subcellularLocation>
        <location evidence="1">Cell membrane</location>
        <topology evidence="1">Lipid-anchor</topology>
    </subcellularLocation>
</comment>
<comment type="similarity">
    <text evidence="1">Belongs to the RlpA family.</text>
</comment>
<name>RLPA_VIBCH</name>